<proteinExistence type="inferred from homology"/>
<comment type="function">
    <text evidence="1">Plays a role in lysophospholipid acylation. Transfers fatty acids to the 1-position via an enzyme-bound acyl-ACP intermediate in the presence of ATP and magnesium. Its physiological function is to regenerate phosphatidylethanolamine from 2-acyl-glycero-3-phosphoethanolamine (2-acyl-GPE) formed by transacylation reactions or degradation by phospholipase A1.</text>
</comment>
<comment type="catalytic activity">
    <reaction evidence="1">
        <text>a 2-acyl-sn-glycero-3-phosphoethanolamine + a fatty acyl-[ACP] = a 1,2-diacyl-sn-glycero-3-phosphoethanolamine + holo-[ACP]</text>
        <dbReference type="Rhea" id="RHEA:10304"/>
        <dbReference type="Rhea" id="RHEA-COMP:9685"/>
        <dbReference type="Rhea" id="RHEA-COMP:14125"/>
        <dbReference type="ChEBI" id="CHEBI:64479"/>
        <dbReference type="ChEBI" id="CHEBI:64612"/>
        <dbReference type="ChEBI" id="CHEBI:65213"/>
        <dbReference type="ChEBI" id="CHEBI:138651"/>
        <dbReference type="EC" id="2.3.1.40"/>
    </reaction>
</comment>
<comment type="catalytic activity">
    <reaction evidence="1">
        <text>a long-chain fatty acid + holo-[ACP] + ATP = a long-chain fatty acyl-[ACP] + AMP + diphosphate</text>
        <dbReference type="Rhea" id="RHEA:45588"/>
        <dbReference type="Rhea" id="RHEA-COMP:9685"/>
        <dbReference type="Rhea" id="RHEA-COMP:12682"/>
        <dbReference type="ChEBI" id="CHEBI:30616"/>
        <dbReference type="ChEBI" id="CHEBI:33019"/>
        <dbReference type="ChEBI" id="CHEBI:57560"/>
        <dbReference type="ChEBI" id="CHEBI:64479"/>
        <dbReference type="ChEBI" id="CHEBI:133243"/>
        <dbReference type="ChEBI" id="CHEBI:456215"/>
        <dbReference type="EC" id="6.2.1.20"/>
    </reaction>
</comment>
<comment type="subcellular location">
    <subcellularLocation>
        <location evidence="1">Cell inner membrane</location>
        <topology evidence="1">Multi-pass membrane protein</topology>
    </subcellularLocation>
</comment>
<comment type="similarity">
    <text evidence="1">In the N-terminal section; belongs to the 2-acyl-GPE acetyltransferase family.</text>
</comment>
<comment type="similarity">
    <text evidence="1">In the C-terminal section; belongs to the ATP-dependent AMP-binding enzyme family.</text>
</comment>
<feature type="chain" id="PRO_1000164346" description="Bifunctional protein Aas">
    <location>
        <begin position="1"/>
        <end position="719"/>
    </location>
</feature>
<feature type="transmembrane region" description="Helical" evidence="1">
    <location>
        <begin position="258"/>
        <end position="277"/>
    </location>
</feature>
<feature type="transmembrane region" description="Helical" evidence="1">
    <location>
        <begin position="409"/>
        <end position="433"/>
    </location>
</feature>
<feature type="region of interest" description="Acyltransferase">
    <location>
        <begin position="15"/>
        <end position="138"/>
    </location>
</feature>
<feature type="region of interest" description="AMP-binding">
    <location>
        <begin position="233"/>
        <end position="646"/>
    </location>
</feature>
<feature type="active site" evidence="1">
    <location>
        <position position="36"/>
    </location>
</feature>
<keyword id="KW-0012">Acyltransferase</keyword>
<keyword id="KW-0067">ATP-binding</keyword>
<keyword id="KW-0997">Cell inner membrane</keyword>
<keyword id="KW-1003">Cell membrane</keyword>
<keyword id="KW-0436">Ligase</keyword>
<keyword id="KW-0472">Membrane</keyword>
<keyword id="KW-0511">Multifunctional enzyme</keyword>
<keyword id="KW-0547">Nucleotide-binding</keyword>
<keyword id="KW-1185">Reference proteome</keyword>
<keyword id="KW-0808">Transferase</keyword>
<keyword id="KW-0812">Transmembrane</keyword>
<keyword id="KW-1133">Transmembrane helix</keyword>
<gene>
    <name evidence="1" type="primary">aas</name>
    <name type="ordered locus">EC55989_3112</name>
</gene>
<name>AAS_ECO55</name>
<dbReference type="EC" id="2.3.1.40" evidence="1"/>
<dbReference type="EC" id="6.2.1.20" evidence="1"/>
<dbReference type="EMBL" id="CU928145">
    <property type="protein sequence ID" value="CAU99029.1"/>
    <property type="molecule type" value="Genomic_DNA"/>
</dbReference>
<dbReference type="RefSeq" id="WP_000899069.1">
    <property type="nucleotide sequence ID" value="NC_011748.1"/>
</dbReference>
<dbReference type="SMR" id="B7LF13"/>
<dbReference type="GeneID" id="93779160"/>
<dbReference type="KEGG" id="eck:EC55989_3112"/>
<dbReference type="HOGENOM" id="CLU_000022_59_8_6"/>
<dbReference type="Proteomes" id="UP000000746">
    <property type="component" value="Chromosome"/>
</dbReference>
<dbReference type="GO" id="GO:0005886">
    <property type="term" value="C:plasma membrane"/>
    <property type="evidence" value="ECO:0007669"/>
    <property type="project" value="UniProtKB-SubCell"/>
</dbReference>
<dbReference type="GO" id="GO:0008779">
    <property type="term" value="F:acyl-[acyl-carrier-protein]-phospholipid O-acyltransferase activity"/>
    <property type="evidence" value="ECO:0007669"/>
    <property type="project" value="UniProtKB-UniRule"/>
</dbReference>
<dbReference type="GO" id="GO:0005524">
    <property type="term" value="F:ATP binding"/>
    <property type="evidence" value="ECO:0007669"/>
    <property type="project" value="UniProtKB-KW"/>
</dbReference>
<dbReference type="GO" id="GO:0008922">
    <property type="term" value="F:long-chain fatty acid [acyl-carrier-protein] ligase activity"/>
    <property type="evidence" value="ECO:0007669"/>
    <property type="project" value="UniProtKB-UniRule"/>
</dbReference>
<dbReference type="GO" id="GO:0031956">
    <property type="term" value="F:medium-chain fatty acid-CoA ligase activity"/>
    <property type="evidence" value="ECO:0007669"/>
    <property type="project" value="TreeGrafter"/>
</dbReference>
<dbReference type="GO" id="GO:0006631">
    <property type="term" value="P:fatty acid metabolic process"/>
    <property type="evidence" value="ECO:0007669"/>
    <property type="project" value="InterPro"/>
</dbReference>
<dbReference type="GO" id="GO:0008654">
    <property type="term" value="P:phospholipid biosynthetic process"/>
    <property type="evidence" value="ECO:0007669"/>
    <property type="project" value="InterPro"/>
</dbReference>
<dbReference type="CDD" id="cd05909">
    <property type="entry name" value="AAS_C"/>
    <property type="match status" value="1"/>
</dbReference>
<dbReference type="CDD" id="cd07989">
    <property type="entry name" value="LPLAT_AGPAT-like"/>
    <property type="match status" value="1"/>
</dbReference>
<dbReference type="FunFam" id="3.30.300.30:FF:000009">
    <property type="entry name" value="Bifunctional protein Aas"/>
    <property type="match status" value="1"/>
</dbReference>
<dbReference type="FunFam" id="3.40.50.12780:FF:000009">
    <property type="entry name" value="Bifunctional protein Aas"/>
    <property type="match status" value="1"/>
</dbReference>
<dbReference type="Gene3D" id="3.30.300.30">
    <property type="match status" value="1"/>
</dbReference>
<dbReference type="Gene3D" id="3.40.50.12780">
    <property type="entry name" value="N-terminal domain of ligase-like"/>
    <property type="match status" value="1"/>
</dbReference>
<dbReference type="HAMAP" id="MF_01162">
    <property type="entry name" value="Aas"/>
    <property type="match status" value="1"/>
</dbReference>
<dbReference type="InterPro" id="IPR023775">
    <property type="entry name" value="Aas"/>
</dbReference>
<dbReference type="InterPro" id="IPR045851">
    <property type="entry name" value="AMP-bd_C_sf"/>
</dbReference>
<dbReference type="InterPro" id="IPR020845">
    <property type="entry name" value="AMP-binding_CS"/>
</dbReference>
<dbReference type="InterPro" id="IPR000873">
    <property type="entry name" value="AMP-dep_synth/lig_dom"/>
</dbReference>
<dbReference type="InterPro" id="IPR042099">
    <property type="entry name" value="ANL_N_sf"/>
</dbReference>
<dbReference type="InterPro" id="IPR002123">
    <property type="entry name" value="Plipid/glycerol_acylTrfase"/>
</dbReference>
<dbReference type="NCBIfam" id="NF005959">
    <property type="entry name" value="PRK08043.1"/>
    <property type="match status" value="1"/>
</dbReference>
<dbReference type="PANTHER" id="PTHR43201">
    <property type="entry name" value="ACYL-COA SYNTHETASE"/>
    <property type="match status" value="1"/>
</dbReference>
<dbReference type="PANTHER" id="PTHR43201:SF8">
    <property type="entry name" value="ACYL-COA SYNTHETASE FAMILY MEMBER 3"/>
    <property type="match status" value="1"/>
</dbReference>
<dbReference type="Pfam" id="PF01553">
    <property type="entry name" value="Acyltransferase"/>
    <property type="match status" value="1"/>
</dbReference>
<dbReference type="Pfam" id="PF00501">
    <property type="entry name" value="AMP-binding"/>
    <property type="match status" value="1"/>
</dbReference>
<dbReference type="SMART" id="SM00563">
    <property type="entry name" value="PlsC"/>
    <property type="match status" value="1"/>
</dbReference>
<dbReference type="SUPFAM" id="SSF56801">
    <property type="entry name" value="Acetyl-CoA synthetase-like"/>
    <property type="match status" value="1"/>
</dbReference>
<dbReference type="SUPFAM" id="SSF69593">
    <property type="entry name" value="Glycerol-3-phosphate (1)-acyltransferase"/>
    <property type="match status" value="1"/>
</dbReference>
<dbReference type="PROSITE" id="PS00455">
    <property type="entry name" value="AMP_BINDING"/>
    <property type="match status" value="1"/>
</dbReference>
<evidence type="ECO:0000255" key="1">
    <source>
        <dbReference type="HAMAP-Rule" id="MF_01162"/>
    </source>
</evidence>
<protein>
    <recommendedName>
        <fullName evidence="1">Bifunctional protein Aas</fullName>
    </recommendedName>
    <domain>
        <recommendedName>
            <fullName evidence="1">2-acylglycerophosphoethanolamine acyltransferase</fullName>
            <ecNumber evidence="1">2.3.1.40</ecNumber>
        </recommendedName>
        <alternativeName>
            <fullName evidence="1">2-acyl-GPE acyltransferase</fullName>
        </alternativeName>
        <alternativeName>
            <fullName evidence="1">Acyl-[acyl-carrier-protein]--phospholipid O-acyltransferase</fullName>
        </alternativeName>
    </domain>
    <domain>
        <recommendedName>
            <fullName evidence="1">Acyl-[acyl-carrier-protein] synthetase</fullName>
            <ecNumber evidence="1">6.2.1.20</ecNumber>
        </recommendedName>
        <alternativeName>
            <fullName evidence="1">Acyl-ACP synthetase</fullName>
        </alternativeName>
        <alternativeName>
            <fullName evidence="1">Long-chain-fatty-acid--[acyl-carrier-protein] ligase</fullName>
        </alternativeName>
    </domain>
</protein>
<sequence>MLFSFFRNLCRVLYRVRVTGDTQALKGERVLITPNHVSFIDGILLGLFLPVRPVFAVYTSISQQWYMRWLKSFIDFVPLDPTQPMAIKHLVRLVEQGRPVVIFPEGRITTTGSLMKIYDGAGFVAAKSGATVIPVRIEGAELTHFSRLKGLVKRRLFPQITLHILPPTQVEMPDAPRARDRRKIAGEMLHQIMMEARMAVRPRETLYESLLSAMYRFGAGKKCVEDVNFTPDSYRKLLTKTLFVGRILEKYSVEGERIGLMLPNAGISAAVIFGAIARRRIPAMMNYTAGVKGLTSAITAAEIKTIFTSRQFLDKGKLWHLPEQLTQVRWVYLEDLKADVTTADKVWIFAHLLMPRLAQVKQQPEEEALILFTSGSEGHPKGVVHSHKSILANVEQIKTIADFTTNDRFMSALPLFHSFGLTVGLFTPLLTGAEVFLYPSPLHYRIVPELVYDRSCTVLFGTSTFLGHYARFANPYDFYRLRYVVAGAEKLQESTKQLWQDKFGLRILEGYGVTECAPVVSINVPMAAKPGTVGRILPGMDARLLSVPGIEEGGRLQLKGPNIMNGYLRVEKPGVLEVPTAENVRGEMERGWYDTGDIVRFDEQGFVQIQGRAKRFAKIAGEMVSLEMVEQLALGVSPDKVHATAIKSDASKGEALVLFTTDNELTRDKLQQYAREHGVPELAVPRDIRYLKQMPLLGSGKPDFVTLKSWVDEAEQHDE</sequence>
<reference key="1">
    <citation type="journal article" date="2009" name="PLoS Genet.">
        <title>Organised genome dynamics in the Escherichia coli species results in highly diverse adaptive paths.</title>
        <authorList>
            <person name="Touchon M."/>
            <person name="Hoede C."/>
            <person name="Tenaillon O."/>
            <person name="Barbe V."/>
            <person name="Baeriswyl S."/>
            <person name="Bidet P."/>
            <person name="Bingen E."/>
            <person name="Bonacorsi S."/>
            <person name="Bouchier C."/>
            <person name="Bouvet O."/>
            <person name="Calteau A."/>
            <person name="Chiapello H."/>
            <person name="Clermont O."/>
            <person name="Cruveiller S."/>
            <person name="Danchin A."/>
            <person name="Diard M."/>
            <person name="Dossat C."/>
            <person name="Karoui M.E."/>
            <person name="Frapy E."/>
            <person name="Garry L."/>
            <person name="Ghigo J.M."/>
            <person name="Gilles A.M."/>
            <person name="Johnson J."/>
            <person name="Le Bouguenec C."/>
            <person name="Lescat M."/>
            <person name="Mangenot S."/>
            <person name="Martinez-Jehanne V."/>
            <person name="Matic I."/>
            <person name="Nassif X."/>
            <person name="Oztas S."/>
            <person name="Petit M.A."/>
            <person name="Pichon C."/>
            <person name="Rouy Z."/>
            <person name="Ruf C.S."/>
            <person name="Schneider D."/>
            <person name="Tourret J."/>
            <person name="Vacherie B."/>
            <person name="Vallenet D."/>
            <person name="Medigue C."/>
            <person name="Rocha E.P.C."/>
            <person name="Denamur E."/>
        </authorList>
    </citation>
    <scope>NUCLEOTIDE SEQUENCE [LARGE SCALE GENOMIC DNA]</scope>
    <source>
        <strain>55989 / EAEC</strain>
    </source>
</reference>
<organism>
    <name type="scientific">Escherichia coli (strain 55989 / EAEC)</name>
    <dbReference type="NCBI Taxonomy" id="585055"/>
    <lineage>
        <taxon>Bacteria</taxon>
        <taxon>Pseudomonadati</taxon>
        <taxon>Pseudomonadota</taxon>
        <taxon>Gammaproteobacteria</taxon>
        <taxon>Enterobacterales</taxon>
        <taxon>Enterobacteriaceae</taxon>
        <taxon>Escherichia</taxon>
    </lineage>
</organism>
<accession>B7LF13</accession>